<reference key="1">
    <citation type="journal article" date="2011" name="J. Bacteriol.">
        <title>Comparative genomics of 28 Salmonella enterica isolates: evidence for CRISPR-mediated adaptive sublineage evolution.</title>
        <authorList>
            <person name="Fricke W.F."/>
            <person name="Mammel M.K."/>
            <person name="McDermott P.F."/>
            <person name="Tartera C."/>
            <person name="White D.G."/>
            <person name="Leclerc J.E."/>
            <person name="Ravel J."/>
            <person name="Cebula T.A."/>
        </authorList>
    </citation>
    <scope>NUCLEOTIDE SEQUENCE [LARGE SCALE GENOMIC DNA]</scope>
    <source>
        <strain>CVM19633</strain>
    </source>
</reference>
<sequence length="622" mass="69301">MSTDNKQSLPAITLAAIGVVYGDIGTSPLYTLRECLSGQFGFGVERDAVFGFLSLIFWLLIFVVSIKYLTFVMRADNAGEGGILTLMSLAGRNTSARTTSMLVIMGLIGGSFFYGEVVITPAISVMSAIEGLEIVAPQLDTWIVPLSIIVLTLLFMIQKHGTGMVGKLFAPIMLTWFLILAVLGLRSIIANPEVLHALNPVWAVRFFLEYKTVSFIALGAVVLSITGVEALYADMGHFGKFPIRLAWFTVVLPSLVLNYFGQGALLLKHPEAIKNPFFLLAPDWALIPLLILAALATVIASQAVISGVFSLTRQAVRLGYLSPMRIIHTSEMESGQIYIPFVNWLLYFAVVVVIVSFEHSSNLAAAYGIAVTGTMVLTSILSTTVARKNWHWNKYFVALILIAFLCVDIPLFSANLDKLLSGGWLPLSLGLIMFTIMTTWKSERFRLLRRMHEHGNSLEAMIASLEKSPPVRVPGTAVYMSRALSVIPFALLHNLKHNKVLHERVILLTLRTEDAPYVHNVRRVQIEQLSPTFWRVVASYGWRETPNVEEVFHRCGLEGLSCRMMETSFFMSHESLIVGKRPWYLRLRGKLYLLLQRNALRAPDQFEIPPNRVIELGTQVEI</sequence>
<evidence type="ECO:0000255" key="1">
    <source>
        <dbReference type="HAMAP-Rule" id="MF_01522"/>
    </source>
</evidence>
<name>KUP_SALSV</name>
<keyword id="KW-0997">Cell inner membrane</keyword>
<keyword id="KW-1003">Cell membrane</keyword>
<keyword id="KW-0406">Ion transport</keyword>
<keyword id="KW-0472">Membrane</keyword>
<keyword id="KW-0630">Potassium</keyword>
<keyword id="KW-0633">Potassium transport</keyword>
<keyword id="KW-0769">Symport</keyword>
<keyword id="KW-0812">Transmembrane</keyword>
<keyword id="KW-1133">Transmembrane helix</keyword>
<keyword id="KW-0813">Transport</keyword>
<organism>
    <name type="scientific">Salmonella schwarzengrund (strain CVM19633)</name>
    <dbReference type="NCBI Taxonomy" id="439843"/>
    <lineage>
        <taxon>Bacteria</taxon>
        <taxon>Pseudomonadati</taxon>
        <taxon>Pseudomonadota</taxon>
        <taxon>Gammaproteobacteria</taxon>
        <taxon>Enterobacterales</taxon>
        <taxon>Enterobacteriaceae</taxon>
        <taxon>Salmonella</taxon>
    </lineage>
</organism>
<accession>B4TN48</accession>
<protein>
    <recommendedName>
        <fullName evidence="1">Low affinity potassium transport system protein Kup</fullName>
    </recommendedName>
    <alternativeName>
        <fullName evidence="1">Kup system potassium uptake protein</fullName>
    </alternativeName>
</protein>
<dbReference type="EMBL" id="CP001127">
    <property type="protein sequence ID" value="ACF88659.1"/>
    <property type="molecule type" value="Genomic_DNA"/>
</dbReference>
<dbReference type="RefSeq" id="WP_000102338.1">
    <property type="nucleotide sequence ID" value="NC_011094.1"/>
</dbReference>
<dbReference type="KEGG" id="sew:SeSA_A4092"/>
<dbReference type="HOGENOM" id="CLU_008142_4_2_6"/>
<dbReference type="Proteomes" id="UP000001865">
    <property type="component" value="Chromosome"/>
</dbReference>
<dbReference type="GO" id="GO:0005886">
    <property type="term" value="C:plasma membrane"/>
    <property type="evidence" value="ECO:0007669"/>
    <property type="project" value="UniProtKB-SubCell"/>
</dbReference>
<dbReference type="GO" id="GO:0015079">
    <property type="term" value="F:potassium ion transmembrane transporter activity"/>
    <property type="evidence" value="ECO:0007669"/>
    <property type="project" value="UniProtKB-UniRule"/>
</dbReference>
<dbReference type="GO" id="GO:0015293">
    <property type="term" value="F:symporter activity"/>
    <property type="evidence" value="ECO:0007669"/>
    <property type="project" value="UniProtKB-UniRule"/>
</dbReference>
<dbReference type="HAMAP" id="MF_01522">
    <property type="entry name" value="Kup"/>
    <property type="match status" value="1"/>
</dbReference>
<dbReference type="InterPro" id="IPR003855">
    <property type="entry name" value="K+_transporter"/>
</dbReference>
<dbReference type="InterPro" id="IPR053952">
    <property type="entry name" value="K_trans_C"/>
</dbReference>
<dbReference type="InterPro" id="IPR053951">
    <property type="entry name" value="K_trans_N"/>
</dbReference>
<dbReference type="InterPro" id="IPR023051">
    <property type="entry name" value="Kup"/>
</dbReference>
<dbReference type="NCBIfam" id="TIGR00794">
    <property type="entry name" value="kup"/>
    <property type="match status" value="1"/>
</dbReference>
<dbReference type="NCBIfam" id="NF008015">
    <property type="entry name" value="PRK10745.1"/>
    <property type="match status" value="1"/>
</dbReference>
<dbReference type="PANTHER" id="PTHR30540:SF79">
    <property type="entry name" value="LOW AFFINITY POTASSIUM TRANSPORT SYSTEM PROTEIN KUP"/>
    <property type="match status" value="1"/>
</dbReference>
<dbReference type="PANTHER" id="PTHR30540">
    <property type="entry name" value="OSMOTIC STRESS POTASSIUM TRANSPORTER"/>
    <property type="match status" value="1"/>
</dbReference>
<dbReference type="Pfam" id="PF02705">
    <property type="entry name" value="K_trans"/>
    <property type="match status" value="1"/>
</dbReference>
<dbReference type="Pfam" id="PF22776">
    <property type="entry name" value="K_trans_C"/>
    <property type="match status" value="1"/>
</dbReference>
<comment type="function">
    <text evidence="1">Responsible for the low-affinity transport of potassium into the cell. Likely operates as a K(+):H(+) symporter.</text>
</comment>
<comment type="catalytic activity">
    <reaction evidence="1">
        <text>K(+)(in) + H(+)(in) = K(+)(out) + H(+)(out)</text>
        <dbReference type="Rhea" id="RHEA:28490"/>
        <dbReference type="ChEBI" id="CHEBI:15378"/>
        <dbReference type="ChEBI" id="CHEBI:29103"/>
    </reaction>
    <physiologicalReaction direction="right-to-left" evidence="1">
        <dbReference type="Rhea" id="RHEA:28492"/>
    </physiologicalReaction>
</comment>
<comment type="subcellular location">
    <subcellularLocation>
        <location evidence="1">Cell inner membrane</location>
        <topology evidence="1">Multi-pass membrane protein</topology>
    </subcellularLocation>
</comment>
<comment type="similarity">
    <text evidence="1">Belongs to the HAK/KUP transporter (TC 2.A.72) family.</text>
</comment>
<gene>
    <name evidence="1" type="primary">kup</name>
    <name type="ordered locus">SeSA_A4092</name>
</gene>
<feature type="chain" id="PRO_1000190283" description="Low affinity potassium transport system protein Kup">
    <location>
        <begin position="1"/>
        <end position="622"/>
    </location>
</feature>
<feature type="transmembrane region" description="Helical" evidence="1">
    <location>
        <begin position="9"/>
        <end position="29"/>
    </location>
</feature>
<feature type="transmembrane region" description="Helical" evidence="1">
    <location>
        <begin position="49"/>
        <end position="69"/>
    </location>
</feature>
<feature type="transmembrane region" description="Helical" evidence="1">
    <location>
        <begin position="103"/>
        <end position="123"/>
    </location>
</feature>
<feature type="transmembrane region" description="Helical" evidence="1">
    <location>
        <begin position="137"/>
        <end position="157"/>
    </location>
</feature>
<feature type="transmembrane region" description="Helical" evidence="1">
    <location>
        <begin position="165"/>
        <end position="185"/>
    </location>
</feature>
<feature type="transmembrane region" description="Helical" evidence="1">
    <location>
        <begin position="213"/>
        <end position="233"/>
    </location>
</feature>
<feature type="transmembrane region" description="Helical" evidence="1">
    <location>
        <begin position="247"/>
        <end position="267"/>
    </location>
</feature>
<feature type="transmembrane region" description="Helical" evidence="1">
    <location>
        <begin position="276"/>
        <end position="296"/>
    </location>
</feature>
<feature type="transmembrane region" description="Helical" evidence="1">
    <location>
        <begin position="337"/>
        <end position="357"/>
    </location>
</feature>
<feature type="transmembrane region" description="Helical" evidence="1">
    <location>
        <begin position="363"/>
        <end position="383"/>
    </location>
</feature>
<feature type="transmembrane region" description="Helical" evidence="1">
    <location>
        <begin position="396"/>
        <end position="416"/>
    </location>
</feature>
<feature type="transmembrane region" description="Helical" evidence="1">
    <location>
        <begin position="419"/>
        <end position="439"/>
    </location>
</feature>
<proteinExistence type="inferred from homology"/>